<dbReference type="EMBL" id="M36265">
    <property type="protein sequence ID" value="AAA26580.1"/>
    <property type="molecule type" value="Genomic_DNA"/>
</dbReference>
<dbReference type="STRING" id="273526.SMDB11_3784"/>
<dbReference type="GO" id="GO:1990904">
    <property type="term" value="C:ribonucleoprotein complex"/>
    <property type="evidence" value="ECO:0007669"/>
    <property type="project" value="UniProtKB-KW"/>
</dbReference>
<dbReference type="GO" id="GO:0005840">
    <property type="term" value="C:ribosome"/>
    <property type="evidence" value="ECO:0007669"/>
    <property type="project" value="UniProtKB-KW"/>
</dbReference>
<dbReference type="GO" id="GO:0019843">
    <property type="term" value="F:rRNA binding"/>
    <property type="evidence" value="ECO:0007669"/>
    <property type="project" value="UniProtKB-KW"/>
</dbReference>
<gene>
    <name type="primary">rplX</name>
</gene>
<evidence type="ECO:0000250" key="1"/>
<evidence type="ECO:0000305" key="2"/>
<proteinExistence type="inferred from homology"/>
<sequence>FEDAKKVRFFKSNSETIK</sequence>
<accession>P49624</accession>
<name>RL24_SERMA</name>
<feature type="chain" id="PRO_0000130709" description="Large ribosomal subunit protein uL24">
    <location>
        <begin position="1" status="less than"/>
        <end position="18"/>
    </location>
</feature>
<feature type="non-terminal residue">
    <location>
        <position position="1"/>
    </location>
</feature>
<comment type="function">
    <text evidence="1">One of two assembly initiator proteins, it binds directly to the 5'-end of the 23S rRNA, where it nucleates assembly of the 50S subunit.</text>
</comment>
<comment type="function">
    <text evidence="1">One of the proteins that surrounds the polypeptide exit tunnel on the outside of the subunit.</text>
</comment>
<comment type="subunit">
    <text evidence="1">Part of the 50S ribosomal subunit.</text>
</comment>
<comment type="similarity">
    <text evidence="2">Belongs to the universal ribosomal protein uL24 family.</text>
</comment>
<keyword id="KW-0687">Ribonucleoprotein</keyword>
<keyword id="KW-0689">Ribosomal protein</keyword>
<keyword id="KW-0694">RNA-binding</keyword>
<keyword id="KW-0699">rRNA-binding</keyword>
<reference key="1">
    <citation type="journal article" date="1988" name="J. Mol. Biol.">
        <title>Translational regulation of the spc operon in Escherichia coli. Identification and structural analysis of the target site for S8 repressor protein.</title>
        <authorList>
            <person name="Cerretti D.P."/>
            <person name="Mattheakis L.C."/>
            <person name="Kearney K.R."/>
            <person name="Vu L."/>
            <person name="Nomura M."/>
        </authorList>
    </citation>
    <scope>NUCLEOTIDE SEQUENCE [GENOMIC DNA]</scope>
    <source>
        <strain>NO1001</strain>
    </source>
</reference>
<organism>
    <name type="scientific">Serratia marcescens</name>
    <dbReference type="NCBI Taxonomy" id="615"/>
    <lineage>
        <taxon>Bacteria</taxon>
        <taxon>Pseudomonadati</taxon>
        <taxon>Pseudomonadota</taxon>
        <taxon>Gammaproteobacteria</taxon>
        <taxon>Enterobacterales</taxon>
        <taxon>Yersiniaceae</taxon>
        <taxon>Serratia</taxon>
    </lineage>
</organism>
<protein>
    <recommendedName>
        <fullName evidence="2">Large ribosomal subunit protein uL24</fullName>
    </recommendedName>
    <alternativeName>
        <fullName>50S ribosomal protein L24</fullName>
    </alternativeName>
</protein>